<protein>
    <recommendedName>
        <fullName evidence="1">Large ribosomal subunit protein uL22</fullName>
    </recommendedName>
    <alternativeName>
        <fullName evidence="2">50S ribosomal protein L22</fullName>
    </alternativeName>
</protein>
<reference key="1">
    <citation type="journal article" date="1996" name="Microbiology">
        <title>Molecular analysis of a new insertion sequence from Actinobacillus (Haemophilus) actinomycetemcomitans FDC Y4.</title>
        <authorList>
            <person name="Hayashida H."/>
            <person name="Hotokezaka H."/>
            <person name="Ohara N."/>
            <person name="Kimura M."/>
            <person name="Takagi O."/>
            <person name="Yamada T."/>
        </authorList>
    </citation>
    <scope>NUCLEOTIDE SEQUENCE [GENOMIC DNA]</scope>
    <source>
        <strain>ATCC 43718 / FDC Y4 / Serotype b</strain>
    </source>
</reference>
<keyword id="KW-0687">Ribonucleoprotein</keyword>
<keyword id="KW-0689">Ribosomal protein</keyword>
<keyword id="KW-0694">RNA-binding</keyword>
<keyword id="KW-0699">rRNA-binding</keyword>
<name>RL22_AGGAC</name>
<comment type="function">
    <text evidence="1">This protein binds specifically to 23S rRNA; its binding is stimulated by other ribosomal proteins, e.g. L4, L17, and L20. It is important during the early stages of 50S assembly. It makes multiple contacts with different domains of the 23S rRNA in the assembled 50S subunit and ribosome (By similarity).</text>
</comment>
<comment type="function">
    <text evidence="1">The globular domain of the protein is located near the polypeptide exit tunnel on the outside of the subunit, while an extended beta-hairpin is found that lines the wall of the exit tunnel in the center of the 70S ribosome.</text>
</comment>
<comment type="subunit">
    <text evidence="1">Part of the 50S ribosomal subunit.</text>
</comment>
<comment type="similarity">
    <text evidence="1">Belongs to the universal ribosomal protein uL22 family.</text>
</comment>
<feature type="chain" id="PRO_0000125107" description="Large ribosomal subunit protein uL22">
    <location>
        <begin position="1"/>
        <end position="110"/>
    </location>
</feature>
<dbReference type="EMBL" id="D64071">
    <property type="protein sequence ID" value="BAA10952.1"/>
    <property type="molecule type" value="Genomic_DNA"/>
</dbReference>
<dbReference type="RefSeq" id="WP_005539363.1">
    <property type="nucleotide sequence ID" value="NZ_VSEW01000015.1"/>
</dbReference>
<dbReference type="SMR" id="P55838"/>
<dbReference type="STRING" id="714.ACT75_03735"/>
<dbReference type="GeneID" id="77210691"/>
<dbReference type="eggNOG" id="COG0091">
    <property type="taxonomic scope" value="Bacteria"/>
</dbReference>
<dbReference type="OMA" id="KRIQPRA"/>
<dbReference type="OrthoDB" id="9805969at2"/>
<dbReference type="GO" id="GO:0022625">
    <property type="term" value="C:cytosolic large ribosomal subunit"/>
    <property type="evidence" value="ECO:0007669"/>
    <property type="project" value="TreeGrafter"/>
</dbReference>
<dbReference type="GO" id="GO:0019843">
    <property type="term" value="F:rRNA binding"/>
    <property type="evidence" value="ECO:0007669"/>
    <property type="project" value="UniProtKB-UniRule"/>
</dbReference>
<dbReference type="GO" id="GO:0003735">
    <property type="term" value="F:structural constituent of ribosome"/>
    <property type="evidence" value="ECO:0007669"/>
    <property type="project" value="InterPro"/>
</dbReference>
<dbReference type="GO" id="GO:0006412">
    <property type="term" value="P:translation"/>
    <property type="evidence" value="ECO:0007669"/>
    <property type="project" value="UniProtKB-UniRule"/>
</dbReference>
<dbReference type="CDD" id="cd00336">
    <property type="entry name" value="Ribosomal_L22"/>
    <property type="match status" value="1"/>
</dbReference>
<dbReference type="FunFam" id="3.90.470.10:FF:000001">
    <property type="entry name" value="50S ribosomal protein L22"/>
    <property type="match status" value="1"/>
</dbReference>
<dbReference type="Gene3D" id="3.90.470.10">
    <property type="entry name" value="Ribosomal protein L22/L17"/>
    <property type="match status" value="1"/>
</dbReference>
<dbReference type="HAMAP" id="MF_01331_B">
    <property type="entry name" value="Ribosomal_uL22_B"/>
    <property type="match status" value="1"/>
</dbReference>
<dbReference type="InterPro" id="IPR001063">
    <property type="entry name" value="Ribosomal_uL22"/>
</dbReference>
<dbReference type="InterPro" id="IPR005727">
    <property type="entry name" value="Ribosomal_uL22_bac/chlpt-type"/>
</dbReference>
<dbReference type="InterPro" id="IPR047867">
    <property type="entry name" value="Ribosomal_uL22_bac/org-type"/>
</dbReference>
<dbReference type="InterPro" id="IPR018260">
    <property type="entry name" value="Ribosomal_uL22_CS"/>
</dbReference>
<dbReference type="InterPro" id="IPR036394">
    <property type="entry name" value="Ribosomal_uL22_sf"/>
</dbReference>
<dbReference type="NCBIfam" id="TIGR01044">
    <property type="entry name" value="rplV_bact"/>
    <property type="match status" value="1"/>
</dbReference>
<dbReference type="PANTHER" id="PTHR13501">
    <property type="entry name" value="CHLOROPLAST 50S RIBOSOMAL PROTEIN L22-RELATED"/>
    <property type="match status" value="1"/>
</dbReference>
<dbReference type="PANTHER" id="PTHR13501:SF8">
    <property type="entry name" value="LARGE RIBOSOMAL SUBUNIT PROTEIN UL22M"/>
    <property type="match status" value="1"/>
</dbReference>
<dbReference type="Pfam" id="PF00237">
    <property type="entry name" value="Ribosomal_L22"/>
    <property type="match status" value="1"/>
</dbReference>
<dbReference type="SUPFAM" id="SSF54843">
    <property type="entry name" value="Ribosomal protein L22"/>
    <property type="match status" value="1"/>
</dbReference>
<dbReference type="PROSITE" id="PS00464">
    <property type="entry name" value="RIBOSOMAL_L22"/>
    <property type="match status" value="1"/>
</dbReference>
<accession>P55838</accession>
<proteinExistence type="inferred from homology"/>
<evidence type="ECO:0000255" key="1">
    <source>
        <dbReference type="HAMAP-Rule" id="MF_01331"/>
    </source>
</evidence>
<evidence type="ECO:0000305" key="2"/>
<organism>
    <name type="scientific">Aggregatibacter actinomycetemcomitans</name>
    <name type="common">Actinobacillus actinomycetemcomitans</name>
    <name type="synonym">Haemophilus actinomycetemcomitans</name>
    <dbReference type="NCBI Taxonomy" id="714"/>
    <lineage>
        <taxon>Bacteria</taxon>
        <taxon>Pseudomonadati</taxon>
        <taxon>Pseudomonadota</taxon>
        <taxon>Gammaproteobacteria</taxon>
        <taxon>Pasteurellales</taxon>
        <taxon>Pasteurellaceae</taxon>
        <taxon>Aggregatibacter</taxon>
    </lineage>
</organism>
<gene>
    <name evidence="1" type="primary">rplV</name>
</gene>
<sequence>METIAKHRYARTSAQKARLVADLIRGKKVAQALEILTYTNKKASALVKKVLESAIANAEHNDGADIDDLKVAKIFVDEGPSMKRVMPRAKGRADRILKRTSHITVVVSDR</sequence>